<reference key="1">
    <citation type="journal article" date="2005" name="Mol. Phylogenet. Evol.">
        <title>Multigene phylogeny of the Old World mice, Murinae, reveals distinct geographic lineages and the declining utility of mitochondrial genes compared to nuclear genes.</title>
        <authorList>
            <person name="Steppan S.J."/>
            <person name="Adkins R.M."/>
            <person name="Spinks P.Q."/>
            <person name="Hale C."/>
        </authorList>
    </citation>
    <scope>NUCLEOTIDE SEQUENCE [GENOMIC DNA]</scope>
</reference>
<protein>
    <recommendedName>
        <fullName>Cytochrome c oxidase subunit 2</fullName>
        <ecNumber>7.1.1.9</ecNumber>
    </recommendedName>
    <alternativeName>
        <fullName>Cytochrome c oxidase polypeptide II</fullName>
    </alternativeName>
</protein>
<dbReference type="EC" id="7.1.1.9"/>
<dbReference type="EMBL" id="DQ019093">
    <property type="protein sequence ID" value="ABA28371.1"/>
    <property type="molecule type" value="Genomic_DNA"/>
</dbReference>
<dbReference type="SMR" id="Q38S29"/>
<dbReference type="GO" id="GO:0005743">
    <property type="term" value="C:mitochondrial inner membrane"/>
    <property type="evidence" value="ECO:0007669"/>
    <property type="project" value="UniProtKB-SubCell"/>
</dbReference>
<dbReference type="GO" id="GO:0045277">
    <property type="term" value="C:respiratory chain complex IV"/>
    <property type="evidence" value="ECO:0000250"/>
    <property type="project" value="UniProtKB"/>
</dbReference>
<dbReference type="GO" id="GO:0005507">
    <property type="term" value="F:copper ion binding"/>
    <property type="evidence" value="ECO:0007669"/>
    <property type="project" value="InterPro"/>
</dbReference>
<dbReference type="GO" id="GO:0004129">
    <property type="term" value="F:cytochrome-c oxidase activity"/>
    <property type="evidence" value="ECO:0007669"/>
    <property type="project" value="UniProtKB-EC"/>
</dbReference>
<dbReference type="GO" id="GO:0042773">
    <property type="term" value="P:ATP synthesis coupled electron transport"/>
    <property type="evidence" value="ECO:0007669"/>
    <property type="project" value="TreeGrafter"/>
</dbReference>
<dbReference type="CDD" id="cd13912">
    <property type="entry name" value="CcO_II_C"/>
    <property type="match status" value="1"/>
</dbReference>
<dbReference type="FunFam" id="1.10.287.90:FF:000001">
    <property type="entry name" value="Cytochrome c oxidase subunit 2"/>
    <property type="match status" value="1"/>
</dbReference>
<dbReference type="FunFam" id="2.60.40.420:FF:000001">
    <property type="entry name" value="Cytochrome c oxidase subunit 2"/>
    <property type="match status" value="1"/>
</dbReference>
<dbReference type="Gene3D" id="1.10.287.90">
    <property type="match status" value="1"/>
</dbReference>
<dbReference type="Gene3D" id="2.60.40.420">
    <property type="entry name" value="Cupredoxins - blue copper proteins"/>
    <property type="match status" value="1"/>
</dbReference>
<dbReference type="InterPro" id="IPR045187">
    <property type="entry name" value="CcO_II"/>
</dbReference>
<dbReference type="InterPro" id="IPR002429">
    <property type="entry name" value="CcO_II-like_C"/>
</dbReference>
<dbReference type="InterPro" id="IPR034210">
    <property type="entry name" value="CcO_II_C"/>
</dbReference>
<dbReference type="InterPro" id="IPR001505">
    <property type="entry name" value="Copper_CuA"/>
</dbReference>
<dbReference type="InterPro" id="IPR008972">
    <property type="entry name" value="Cupredoxin"/>
</dbReference>
<dbReference type="InterPro" id="IPR014222">
    <property type="entry name" value="Cyt_c_oxidase_su2"/>
</dbReference>
<dbReference type="InterPro" id="IPR011759">
    <property type="entry name" value="Cyt_c_oxidase_su2_TM_dom"/>
</dbReference>
<dbReference type="InterPro" id="IPR036257">
    <property type="entry name" value="Cyt_c_oxidase_su2_TM_sf"/>
</dbReference>
<dbReference type="NCBIfam" id="TIGR02866">
    <property type="entry name" value="CoxB"/>
    <property type="match status" value="1"/>
</dbReference>
<dbReference type="PANTHER" id="PTHR22888:SF9">
    <property type="entry name" value="CYTOCHROME C OXIDASE SUBUNIT 2"/>
    <property type="match status" value="1"/>
</dbReference>
<dbReference type="PANTHER" id="PTHR22888">
    <property type="entry name" value="CYTOCHROME C OXIDASE, SUBUNIT II"/>
    <property type="match status" value="1"/>
</dbReference>
<dbReference type="Pfam" id="PF00116">
    <property type="entry name" value="COX2"/>
    <property type="match status" value="1"/>
</dbReference>
<dbReference type="Pfam" id="PF02790">
    <property type="entry name" value="COX2_TM"/>
    <property type="match status" value="1"/>
</dbReference>
<dbReference type="PRINTS" id="PR01166">
    <property type="entry name" value="CYCOXIDASEII"/>
</dbReference>
<dbReference type="SUPFAM" id="SSF49503">
    <property type="entry name" value="Cupredoxins"/>
    <property type="match status" value="1"/>
</dbReference>
<dbReference type="SUPFAM" id="SSF81464">
    <property type="entry name" value="Cytochrome c oxidase subunit II-like, transmembrane region"/>
    <property type="match status" value="1"/>
</dbReference>
<dbReference type="PROSITE" id="PS00078">
    <property type="entry name" value="COX2"/>
    <property type="match status" value="1"/>
</dbReference>
<dbReference type="PROSITE" id="PS50857">
    <property type="entry name" value="COX2_CUA"/>
    <property type="match status" value="1"/>
</dbReference>
<dbReference type="PROSITE" id="PS50999">
    <property type="entry name" value="COX2_TM"/>
    <property type="match status" value="1"/>
</dbReference>
<sequence>MAYPFQLGLQDATSPIMEELMNFHDHTLMIVFLISTLVLYIISLMLTTKLTHTSTMDAQEVETVWTILPAVILIMIALPSLRILYMMDEINNPVLTVKTMGHQWYWSYEYTDYEDLCFDSYMIPTNDLKPGELRLLEVDNRVVLPMELPIRMLISSEDVLHSWAVPSLGLKTDAIPGRLNQATVTSNRPGLFYGQCSEICGSNHSFMPIVLEMVPLKHFENWSTSMI</sequence>
<keyword id="KW-0186">Copper</keyword>
<keyword id="KW-0249">Electron transport</keyword>
<keyword id="KW-0460">Magnesium</keyword>
<keyword id="KW-0472">Membrane</keyword>
<keyword id="KW-0479">Metal-binding</keyword>
<keyword id="KW-0496">Mitochondrion</keyword>
<keyword id="KW-0999">Mitochondrion inner membrane</keyword>
<keyword id="KW-0679">Respiratory chain</keyword>
<keyword id="KW-1278">Translocase</keyword>
<keyword id="KW-0812">Transmembrane</keyword>
<keyword id="KW-1133">Transmembrane helix</keyword>
<keyword id="KW-0813">Transport</keyword>
<accession>Q38S29</accession>
<organism>
    <name type="scientific">Apodemus semotus</name>
    <name type="common">Taiwan field mouse</name>
    <name type="synonym">Formosan wood mouse</name>
    <dbReference type="NCBI Taxonomy" id="105299"/>
    <lineage>
        <taxon>Eukaryota</taxon>
        <taxon>Metazoa</taxon>
        <taxon>Chordata</taxon>
        <taxon>Craniata</taxon>
        <taxon>Vertebrata</taxon>
        <taxon>Euteleostomi</taxon>
        <taxon>Mammalia</taxon>
        <taxon>Eutheria</taxon>
        <taxon>Euarchontoglires</taxon>
        <taxon>Glires</taxon>
        <taxon>Rodentia</taxon>
        <taxon>Myomorpha</taxon>
        <taxon>Muroidea</taxon>
        <taxon>Muridae</taxon>
        <taxon>Murinae</taxon>
        <taxon>Apodemus</taxon>
    </lineage>
</organism>
<name>COX2_APOSM</name>
<feature type="chain" id="PRO_0000254914" description="Cytochrome c oxidase subunit 2">
    <location>
        <begin position="1"/>
        <end position="227"/>
    </location>
</feature>
<feature type="topological domain" description="Mitochondrial intermembrane" evidence="3">
    <location>
        <begin position="1"/>
        <end position="14"/>
    </location>
</feature>
<feature type="transmembrane region" description="Helical; Name=I" evidence="3">
    <location>
        <begin position="15"/>
        <end position="45"/>
    </location>
</feature>
<feature type="topological domain" description="Mitochondrial matrix" evidence="3">
    <location>
        <begin position="46"/>
        <end position="59"/>
    </location>
</feature>
<feature type="transmembrane region" description="Helical; Name=II" evidence="3">
    <location>
        <begin position="60"/>
        <end position="87"/>
    </location>
</feature>
<feature type="topological domain" description="Mitochondrial intermembrane" evidence="3">
    <location>
        <begin position="88"/>
        <end position="227"/>
    </location>
</feature>
<feature type="binding site" evidence="3">
    <location>
        <position position="161"/>
    </location>
    <ligand>
        <name>Cu cation</name>
        <dbReference type="ChEBI" id="CHEBI:23378"/>
        <label>A1</label>
    </ligand>
</feature>
<feature type="binding site" evidence="3">
    <location>
        <position position="196"/>
    </location>
    <ligand>
        <name>Cu cation</name>
        <dbReference type="ChEBI" id="CHEBI:23378"/>
        <label>A1</label>
    </ligand>
</feature>
<feature type="binding site" evidence="3">
    <location>
        <position position="196"/>
    </location>
    <ligand>
        <name>Cu cation</name>
        <dbReference type="ChEBI" id="CHEBI:23378"/>
        <label>A2</label>
    </ligand>
</feature>
<feature type="binding site" evidence="3">
    <location>
        <position position="198"/>
    </location>
    <ligand>
        <name>Cu cation</name>
        <dbReference type="ChEBI" id="CHEBI:23378"/>
        <label>A2</label>
    </ligand>
</feature>
<feature type="binding site" evidence="3">
    <location>
        <position position="198"/>
    </location>
    <ligand>
        <name>Mg(2+)</name>
        <dbReference type="ChEBI" id="CHEBI:18420"/>
        <note>ligand shared with MT-CO1</note>
    </ligand>
</feature>
<feature type="binding site" evidence="3">
    <location>
        <position position="200"/>
    </location>
    <ligand>
        <name>Cu cation</name>
        <dbReference type="ChEBI" id="CHEBI:23378"/>
        <label>A1</label>
    </ligand>
</feature>
<feature type="binding site" evidence="3">
    <location>
        <position position="200"/>
    </location>
    <ligand>
        <name>Cu cation</name>
        <dbReference type="ChEBI" id="CHEBI:23378"/>
        <label>A2</label>
    </ligand>
</feature>
<feature type="binding site" evidence="3">
    <location>
        <position position="204"/>
    </location>
    <ligand>
        <name>Cu cation</name>
        <dbReference type="ChEBI" id="CHEBI:23378"/>
        <label>A2</label>
    </ligand>
</feature>
<feature type="binding site" evidence="3">
    <location>
        <position position="207"/>
    </location>
    <ligand>
        <name>Cu cation</name>
        <dbReference type="ChEBI" id="CHEBI:23378"/>
        <label>A1</label>
    </ligand>
</feature>
<gene>
    <name type="primary">MT-CO2</name>
    <name type="synonym">COII</name>
    <name type="synonym">COXII</name>
    <name type="synonym">MTCO2</name>
</gene>
<proteinExistence type="inferred from homology"/>
<evidence type="ECO:0000250" key="1">
    <source>
        <dbReference type="UniProtKB" id="P00403"/>
    </source>
</evidence>
<evidence type="ECO:0000250" key="2">
    <source>
        <dbReference type="UniProtKB" id="P00410"/>
    </source>
</evidence>
<evidence type="ECO:0000250" key="3">
    <source>
        <dbReference type="UniProtKB" id="P68530"/>
    </source>
</evidence>
<evidence type="ECO:0000305" key="4"/>
<geneLocation type="mitochondrion"/>
<comment type="function">
    <text evidence="2">Component of the cytochrome c oxidase, the last enzyme in the mitochondrial electron transport chain which drives oxidative phosphorylation. The respiratory chain contains 3 multisubunit complexes succinate dehydrogenase (complex II, CII), ubiquinol-cytochrome c oxidoreductase (cytochrome b-c1 complex, complex III, CIII) and cytochrome c oxidase (complex IV, CIV), that cooperate to transfer electrons derived from NADH and succinate to molecular oxygen, creating an electrochemical gradient over the inner membrane that drives transmembrane transport and the ATP synthase. Cytochrome c oxidase is the component of the respiratory chain that catalyzes the reduction of oxygen to water. Electrons originating from reduced cytochrome c in the intermembrane space (IMS) are transferred via the dinuclear copper A center (CU(A)) of subunit 2 and heme A of subunit 1 to the active site in subunit 1, a binuclear center (BNC) formed by heme A3 and copper B (CU(B)). The BNC reduces molecular oxygen to 2 water molecules using 4 electrons from cytochrome c in the IMS and 4 protons from the mitochondrial matrix.</text>
</comment>
<comment type="catalytic activity">
    <reaction evidence="2">
        <text>4 Fe(II)-[cytochrome c] + O2 + 8 H(+)(in) = 4 Fe(III)-[cytochrome c] + 2 H2O + 4 H(+)(out)</text>
        <dbReference type="Rhea" id="RHEA:11436"/>
        <dbReference type="Rhea" id="RHEA-COMP:10350"/>
        <dbReference type="Rhea" id="RHEA-COMP:14399"/>
        <dbReference type="ChEBI" id="CHEBI:15377"/>
        <dbReference type="ChEBI" id="CHEBI:15378"/>
        <dbReference type="ChEBI" id="CHEBI:15379"/>
        <dbReference type="ChEBI" id="CHEBI:29033"/>
        <dbReference type="ChEBI" id="CHEBI:29034"/>
        <dbReference type="EC" id="7.1.1.9"/>
    </reaction>
    <physiologicalReaction direction="left-to-right" evidence="2">
        <dbReference type="Rhea" id="RHEA:11437"/>
    </physiologicalReaction>
</comment>
<comment type="cofactor">
    <cofactor evidence="3">
        <name>Cu cation</name>
        <dbReference type="ChEBI" id="CHEBI:23378"/>
    </cofactor>
    <text evidence="3">Binds a dinuclear copper A center per subunit.</text>
</comment>
<comment type="subunit">
    <text evidence="1 3">Component of the cytochrome c oxidase (complex IV, CIV), a multisubunit enzyme composed of 14 subunits. The complex is composed of a catalytic core of 3 subunits MT-CO1, MT-CO2 and MT-CO3, encoded in the mitochondrial DNA, and 11 supernumerary subunits COX4I, COX5A, COX5B, COX6A, COX6B, COX6C, COX7A, COX7B, COX7C, COX8 and NDUFA4, which are encoded in the nuclear genome. The complex exists as a monomer or a dimer and forms supercomplexes (SCs) in the inner mitochondrial membrane with NADH-ubiquinone oxidoreductase (complex I, CI) and ubiquinol-cytochrome c oxidoreductase (cytochrome b-c1 complex, complex III, CIII), resulting in different assemblies (supercomplex SCI(1)III(2)IV(1) and megacomplex MCI(2)III(2)IV(2)) (By similarity). Found in a complex with TMEM177, COA6, COX18, COX20, SCO1 and SCO2. Interacts with TMEM177 in a COX20-dependent manner. Interacts with COX20. Interacts with COX16 (By similarity).</text>
</comment>
<comment type="subcellular location">
    <subcellularLocation>
        <location evidence="3">Mitochondrion inner membrane</location>
        <topology evidence="3">Multi-pass membrane protein</topology>
    </subcellularLocation>
</comment>
<comment type="similarity">
    <text evidence="4">Belongs to the cytochrome c oxidase subunit 2 family.</text>
</comment>